<protein>
    <recommendedName>
        <fullName>Phosphoribulokinase</fullName>
        <shortName>PRK</shortName>
        <shortName>PRKase</shortName>
        <ecNumber>2.7.1.19</ecNumber>
    </recommendedName>
    <alternativeName>
        <fullName>Phosphopentokinase</fullName>
    </alternativeName>
</protein>
<organism>
    <name type="scientific">Nitrobacter vulgaris</name>
    <dbReference type="NCBI Taxonomy" id="29421"/>
    <lineage>
        <taxon>Bacteria</taxon>
        <taxon>Pseudomonadati</taxon>
        <taxon>Pseudomonadota</taxon>
        <taxon>Alphaproteobacteria</taxon>
        <taxon>Hyphomicrobiales</taxon>
        <taxon>Nitrobacteraceae</taxon>
        <taxon>Nitrobacter</taxon>
    </lineage>
</organism>
<comment type="catalytic activity">
    <reaction>
        <text>D-ribulose 5-phosphate + ATP = D-ribulose 1,5-bisphosphate + ADP + H(+)</text>
        <dbReference type="Rhea" id="RHEA:19365"/>
        <dbReference type="ChEBI" id="CHEBI:15378"/>
        <dbReference type="ChEBI" id="CHEBI:30616"/>
        <dbReference type="ChEBI" id="CHEBI:57870"/>
        <dbReference type="ChEBI" id="CHEBI:58121"/>
        <dbReference type="ChEBI" id="CHEBI:456216"/>
        <dbReference type="EC" id="2.7.1.19"/>
    </reaction>
</comment>
<comment type="pathway">
    <text>Carbohydrate biosynthesis; Calvin cycle.</text>
</comment>
<comment type="similarity">
    <text evidence="2">Belongs to the phosphoribulokinase family.</text>
</comment>
<dbReference type="EC" id="2.7.1.19"/>
<dbReference type="EMBL" id="L22884">
    <property type="protein sequence ID" value="AAA25506.1"/>
    <property type="molecule type" value="Genomic_DNA"/>
</dbReference>
<dbReference type="SMR" id="P37100"/>
<dbReference type="STRING" id="29421.B2M20_17180"/>
<dbReference type="UniPathway" id="UPA00116"/>
<dbReference type="GO" id="GO:0005524">
    <property type="term" value="F:ATP binding"/>
    <property type="evidence" value="ECO:0007669"/>
    <property type="project" value="UniProtKB-KW"/>
</dbReference>
<dbReference type="GO" id="GO:0008974">
    <property type="term" value="F:phosphoribulokinase activity"/>
    <property type="evidence" value="ECO:0007669"/>
    <property type="project" value="UniProtKB-EC"/>
</dbReference>
<dbReference type="GO" id="GO:0019253">
    <property type="term" value="P:reductive pentose-phosphate cycle"/>
    <property type="evidence" value="ECO:0007669"/>
    <property type="project" value="UniProtKB-UniPathway"/>
</dbReference>
<dbReference type="Gene3D" id="3.40.50.300">
    <property type="entry name" value="P-loop containing nucleotide triphosphate hydrolases"/>
    <property type="match status" value="1"/>
</dbReference>
<dbReference type="InterPro" id="IPR027417">
    <property type="entry name" value="P-loop_NTPase"/>
</dbReference>
<dbReference type="InterPro" id="IPR006082">
    <property type="entry name" value="PRK"/>
</dbReference>
<dbReference type="InterPro" id="IPR006083">
    <property type="entry name" value="PRK/URK"/>
</dbReference>
<dbReference type="NCBIfam" id="NF011997">
    <property type="entry name" value="PRK15453.1"/>
    <property type="match status" value="1"/>
</dbReference>
<dbReference type="Pfam" id="PF00485">
    <property type="entry name" value="PRK"/>
    <property type="match status" value="1"/>
</dbReference>
<dbReference type="PRINTS" id="PR00478">
    <property type="entry name" value="PHRIBLKINASE"/>
</dbReference>
<dbReference type="SUPFAM" id="SSF52540">
    <property type="entry name" value="P-loop containing nucleoside triphosphate hydrolases"/>
    <property type="match status" value="1"/>
</dbReference>
<dbReference type="PROSITE" id="PS00567">
    <property type="entry name" value="PHOSPHORIBULOKINASE"/>
    <property type="match status" value="1"/>
</dbReference>
<name>KPPR_NITVU</name>
<proteinExistence type="inferred from homology"/>
<sequence length="290" mass="32908">MLRKHPIISITGSSGAGTTSVKRTFEQIFRRENVVAAYIEGDAFHRYNRAEMRTRMAEESDKGNKHFSHFSPETNLFAELEGVFRSYGETGTGNTRYYVHDDAESALHGVPPGTFTDWQPLPDASDLLFYEGLHGAVVTDKVNVAQYADLKIGVVPVINLEWIQKLHRDRNARGYSTEAVTDTILRRMPDYVNYICPQFAETDINFQRVPTVDTSNPFISRWIPTPDESMVVIRLKNPRGIDFPYLLSMIPSSFMSRANSIVIHGSKLDLAMQLILTPLILQLIERKKRA</sequence>
<evidence type="ECO:0000255" key="1"/>
<evidence type="ECO:0000305" key="2"/>
<reference key="1">
    <citation type="submission" date="1994-01" db="EMBL/GenBank/DDBJ databases">
        <title>Cloning, sequence analysis, expression in E. coli, and genome organization of some Calvin cycle genes from Nitrobacter vulgaris T3.</title>
        <authorList>
            <person name="Strecker M."/>
            <person name="Sickinger E."/>
            <person name="English R.S."/>
            <person name="Shively J.M."/>
            <person name="Bock E."/>
        </authorList>
    </citation>
    <scope>NUCLEOTIDE SEQUENCE [GENOMIC DNA]</scope>
    <source>
        <strain>T3</strain>
    </source>
</reference>
<feature type="chain" id="PRO_0000201954" description="Phosphoribulokinase">
    <location>
        <begin position="1"/>
        <end position="290"/>
    </location>
</feature>
<feature type="binding site" evidence="1">
    <location>
        <begin position="12"/>
        <end position="20"/>
    </location>
    <ligand>
        <name>ATP</name>
        <dbReference type="ChEBI" id="CHEBI:30616"/>
    </ligand>
</feature>
<keyword id="KW-0067">ATP-binding</keyword>
<keyword id="KW-0113">Calvin cycle</keyword>
<keyword id="KW-0418">Kinase</keyword>
<keyword id="KW-0547">Nucleotide-binding</keyword>
<keyword id="KW-0602">Photosynthesis</keyword>
<keyword id="KW-0808">Transferase</keyword>
<gene>
    <name type="primary">cbbP</name>
</gene>
<accession>P37100</accession>